<reference key="1">
    <citation type="journal article" date="2003" name="Cell">
        <title>painless, a Drosophila gene essential for nociception.</title>
        <authorList>
            <person name="Tracey W.D. Jr."/>
            <person name="Wilson R.I."/>
            <person name="Laurent G."/>
            <person name="Benzer S."/>
        </authorList>
    </citation>
    <scope>NUCLEOTIDE SEQUENCE [MRNA]</scope>
    <scope>FUNCTION</scope>
    <scope>TISSUE SPECIFICITY</scope>
</reference>
<reference key="2">
    <citation type="journal article" date="2000" name="Science">
        <title>The genome sequence of Drosophila melanogaster.</title>
        <authorList>
            <person name="Adams M.D."/>
            <person name="Celniker S.E."/>
            <person name="Holt R.A."/>
            <person name="Evans C.A."/>
            <person name="Gocayne J.D."/>
            <person name="Amanatides P.G."/>
            <person name="Scherer S.E."/>
            <person name="Li P.W."/>
            <person name="Hoskins R.A."/>
            <person name="Galle R.F."/>
            <person name="George R.A."/>
            <person name="Lewis S.E."/>
            <person name="Richards S."/>
            <person name="Ashburner M."/>
            <person name="Henderson S.N."/>
            <person name="Sutton G.G."/>
            <person name="Wortman J.R."/>
            <person name="Yandell M.D."/>
            <person name="Zhang Q."/>
            <person name="Chen L.X."/>
            <person name="Brandon R.C."/>
            <person name="Rogers Y.-H.C."/>
            <person name="Blazej R.G."/>
            <person name="Champe M."/>
            <person name="Pfeiffer B.D."/>
            <person name="Wan K.H."/>
            <person name="Doyle C."/>
            <person name="Baxter E.G."/>
            <person name="Helt G."/>
            <person name="Nelson C.R."/>
            <person name="Miklos G.L.G."/>
            <person name="Abril J.F."/>
            <person name="Agbayani A."/>
            <person name="An H.-J."/>
            <person name="Andrews-Pfannkoch C."/>
            <person name="Baldwin D."/>
            <person name="Ballew R.M."/>
            <person name="Basu A."/>
            <person name="Baxendale J."/>
            <person name="Bayraktaroglu L."/>
            <person name="Beasley E.M."/>
            <person name="Beeson K.Y."/>
            <person name="Benos P.V."/>
            <person name="Berman B.P."/>
            <person name="Bhandari D."/>
            <person name="Bolshakov S."/>
            <person name="Borkova D."/>
            <person name="Botchan M.R."/>
            <person name="Bouck J."/>
            <person name="Brokstein P."/>
            <person name="Brottier P."/>
            <person name="Burtis K.C."/>
            <person name="Busam D.A."/>
            <person name="Butler H."/>
            <person name="Cadieu E."/>
            <person name="Center A."/>
            <person name="Chandra I."/>
            <person name="Cherry J.M."/>
            <person name="Cawley S."/>
            <person name="Dahlke C."/>
            <person name="Davenport L.B."/>
            <person name="Davies P."/>
            <person name="de Pablos B."/>
            <person name="Delcher A."/>
            <person name="Deng Z."/>
            <person name="Mays A.D."/>
            <person name="Dew I."/>
            <person name="Dietz S.M."/>
            <person name="Dodson K."/>
            <person name="Doup L.E."/>
            <person name="Downes M."/>
            <person name="Dugan-Rocha S."/>
            <person name="Dunkov B.C."/>
            <person name="Dunn P."/>
            <person name="Durbin K.J."/>
            <person name="Evangelista C.C."/>
            <person name="Ferraz C."/>
            <person name="Ferriera S."/>
            <person name="Fleischmann W."/>
            <person name="Fosler C."/>
            <person name="Gabrielian A.E."/>
            <person name="Garg N.S."/>
            <person name="Gelbart W.M."/>
            <person name="Glasser K."/>
            <person name="Glodek A."/>
            <person name="Gong F."/>
            <person name="Gorrell J.H."/>
            <person name="Gu Z."/>
            <person name="Guan P."/>
            <person name="Harris M."/>
            <person name="Harris N.L."/>
            <person name="Harvey D.A."/>
            <person name="Heiman T.J."/>
            <person name="Hernandez J.R."/>
            <person name="Houck J."/>
            <person name="Hostin D."/>
            <person name="Houston K.A."/>
            <person name="Howland T.J."/>
            <person name="Wei M.-H."/>
            <person name="Ibegwam C."/>
            <person name="Jalali M."/>
            <person name="Kalush F."/>
            <person name="Karpen G.H."/>
            <person name="Ke Z."/>
            <person name="Kennison J.A."/>
            <person name="Ketchum K.A."/>
            <person name="Kimmel B.E."/>
            <person name="Kodira C.D."/>
            <person name="Kraft C.L."/>
            <person name="Kravitz S."/>
            <person name="Kulp D."/>
            <person name="Lai Z."/>
            <person name="Lasko P."/>
            <person name="Lei Y."/>
            <person name="Levitsky A.A."/>
            <person name="Li J.H."/>
            <person name="Li Z."/>
            <person name="Liang Y."/>
            <person name="Lin X."/>
            <person name="Liu X."/>
            <person name="Mattei B."/>
            <person name="McIntosh T.C."/>
            <person name="McLeod M.P."/>
            <person name="McPherson D."/>
            <person name="Merkulov G."/>
            <person name="Milshina N.V."/>
            <person name="Mobarry C."/>
            <person name="Morris J."/>
            <person name="Moshrefi A."/>
            <person name="Mount S.M."/>
            <person name="Moy M."/>
            <person name="Murphy B."/>
            <person name="Murphy L."/>
            <person name="Muzny D.M."/>
            <person name="Nelson D.L."/>
            <person name="Nelson D.R."/>
            <person name="Nelson K.A."/>
            <person name="Nixon K."/>
            <person name="Nusskern D.R."/>
            <person name="Pacleb J.M."/>
            <person name="Palazzolo M."/>
            <person name="Pittman G.S."/>
            <person name="Pan S."/>
            <person name="Pollard J."/>
            <person name="Puri V."/>
            <person name="Reese M.G."/>
            <person name="Reinert K."/>
            <person name="Remington K."/>
            <person name="Saunders R.D.C."/>
            <person name="Scheeler F."/>
            <person name="Shen H."/>
            <person name="Shue B.C."/>
            <person name="Siden-Kiamos I."/>
            <person name="Simpson M."/>
            <person name="Skupski M.P."/>
            <person name="Smith T.J."/>
            <person name="Spier E."/>
            <person name="Spradling A.C."/>
            <person name="Stapleton M."/>
            <person name="Strong R."/>
            <person name="Sun E."/>
            <person name="Svirskas R."/>
            <person name="Tector C."/>
            <person name="Turner R."/>
            <person name="Venter E."/>
            <person name="Wang A.H."/>
            <person name="Wang X."/>
            <person name="Wang Z.-Y."/>
            <person name="Wassarman D.A."/>
            <person name="Weinstock G.M."/>
            <person name="Weissenbach J."/>
            <person name="Williams S.M."/>
            <person name="Woodage T."/>
            <person name="Worley K.C."/>
            <person name="Wu D."/>
            <person name="Yang S."/>
            <person name="Yao Q.A."/>
            <person name="Ye J."/>
            <person name="Yeh R.-F."/>
            <person name="Zaveri J.S."/>
            <person name="Zhan M."/>
            <person name="Zhang G."/>
            <person name="Zhao Q."/>
            <person name="Zheng L."/>
            <person name="Zheng X.H."/>
            <person name="Zhong F.N."/>
            <person name="Zhong W."/>
            <person name="Zhou X."/>
            <person name="Zhu S.C."/>
            <person name="Zhu X."/>
            <person name="Smith H.O."/>
            <person name="Gibbs R.A."/>
            <person name="Myers E.W."/>
            <person name="Rubin G.M."/>
            <person name="Venter J.C."/>
        </authorList>
    </citation>
    <scope>NUCLEOTIDE SEQUENCE [LARGE SCALE GENOMIC DNA]</scope>
    <source>
        <strain>Berkeley</strain>
    </source>
</reference>
<reference key="3">
    <citation type="journal article" date="2002" name="Genome Biol.">
        <title>Annotation of the Drosophila melanogaster euchromatic genome: a systematic review.</title>
        <authorList>
            <person name="Misra S."/>
            <person name="Crosby M.A."/>
            <person name="Mungall C.J."/>
            <person name="Matthews B.B."/>
            <person name="Campbell K.S."/>
            <person name="Hradecky P."/>
            <person name="Huang Y."/>
            <person name="Kaminker J.S."/>
            <person name="Millburn G.H."/>
            <person name="Prochnik S.E."/>
            <person name="Smith C.D."/>
            <person name="Tupy J.L."/>
            <person name="Whitfield E.J."/>
            <person name="Bayraktaroglu L."/>
            <person name="Berman B.P."/>
            <person name="Bettencourt B.R."/>
            <person name="Celniker S.E."/>
            <person name="de Grey A.D.N.J."/>
            <person name="Drysdale R.A."/>
            <person name="Harris N.L."/>
            <person name="Richter J."/>
            <person name="Russo S."/>
            <person name="Schroeder A.J."/>
            <person name="Shu S.Q."/>
            <person name="Stapleton M."/>
            <person name="Yamada C."/>
            <person name="Ashburner M."/>
            <person name="Gelbart W.M."/>
            <person name="Rubin G.M."/>
            <person name="Lewis S.E."/>
        </authorList>
    </citation>
    <scope>GENOME REANNOTATION</scope>
    <source>
        <strain>Berkeley</strain>
    </source>
</reference>
<reference key="4">
    <citation type="submission" date="2004-01" db="EMBL/GenBank/DDBJ databases">
        <authorList>
            <person name="Stapleton M."/>
            <person name="Carlson J.W."/>
            <person name="Chavez C."/>
            <person name="Frise E."/>
            <person name="George R.A."/>
            <person name="Pacleb J.M."/>
            <person name="Park S."/>
            <person name="Wan K.H."/>
            <person name="Yu C."/>
            <person name="Rubin G.M."/>
            <person name="Celniker S.E."/>
        </authorList>
    </citation>
    <scope>NUCLEOTIDE SEQUENCE [LARGE SCALE MRNA]</scope>
    <source>
        <strain>Berkeley</strain>
        <tissue>Embryo</tissue>
    </source>
</reference>
<accession>Q9W0Y6</accession>
<evidence type="ECO:0000255" key="1"/>
<evidence type="ECO:0000256" key="2">
    <source>
        <dbReference type="SAM" id="MobiDB-lite"/>
    </source>
</evidence>
<evidence type="ECO:0000269" key="3">
    <source>
    </source>
</evidence>
<evidence type="ECO:0000305" key="4"/>
<dbReference type="EMBL" id="AY268106">
    <property type="protein sequence ID" value="AAP03646.1"/>
    <property type="molecule type" value="mRNA"/>
</dbReference>
<dbReference type="EMBL" id="AE013599">
    <property type="protein sequence ID" value="AAF47293.1"/>
    <property type="molecule type" value="Genomic_DNA"/>
</dbReference>
<dbReference type="EMBL" id="BT011483">
    <property type="protein sequence ID" value="AAR99141.1"/>
    <property type="molecule type" value="mRNA"/>
</dbReference>
<dbReference type="RefSeq" id="NP_611979.1">
    <property type="nucleotide sequence ID" value="NM_138135.2"/>
</dbReference>
<dbReference type="SMR" id="Q9W0Y6"/>
<dbReference type="BioGRID" id="63553">
    <property type="interactions" value="2"/>
</dbReference>
<dbReference type="FunCoup" id="Q9W0Y6">
    <property type="interactions" value="81"/>
</dbReference>
<dbReference type="IntAct" id="Q9W0Y6">
    <property type="interactions" value="1"/>
</dbReference>
<dbReference type="STRING" id="7227.FBpp0072323"/>
<dbReference type="SwissPalm" id="Q9W0Y6"/>
<dbReference type="PaxDb" id="7227-FBpp0072323"/>
<dbReference type="DNASU" id="37985"/>
<dbReference type="EnsemblMetazoa" id="FBtr0072417">
    <property type="protein sequence ID" value="FBpp0072323"/>
    <property type="gene ID" value="FBgn0060296"/>
</dbReference>
<dbReference type="GeneID" id="37985"/>
<dbReference type="KEGG" id="dme:Dmel_CG15860"/>
<dbReference type="UCSC" id="CG15860-RA">
    <property type="organism name" value="d. melanogaster"/>
</dbReference>
<dbReference type="AGR" id="FB:FBgn0060296"/>
<dbReference type="CTD" id="37985"/>
<dbReference type="FlyBase" id="FBgn0060296">
    <property type="gene designation" value="pain"/>
</dbReference>
<dbReference type="VEuPathDB" id="VectorBase:FBgn0060296"/>
<dbReference type="eggNOG" id="KOG0510">
    <property type="taxonomic scope" value="Eukaryota"/>
</dbReference>
<dbReference type="GeneTree" id="ENSGT00940000170332"/>
<dbReference type="InParanoid" id="Q9W0Y6"/>
<dbReference type="OMA" id="LPCCCSM"/>
<dbReference type="OrthoDB" id="2157354at2759"/>
<dbReference type="PhylomeDB" id="Q9W0Y6"/>
<dbReference type="BioGRID-ORCS" id="37985">
    <property type="hits" value="0 hits in 1 CRISPR screen"/>
</dbReference>
<dbReference type="GenomeRNAi" id="37985"/>
<dbReference type="PRO" id="PR:Q9W0Y6"/>
<dbReference type="Proteomes" id="UP000000803">
    <property type="component" value="Chromosome 2R"/>
</dbReference>
<dbReference type="Bgee" id="FBgn0060296">
    <property type="expression patterns" value="Expressed in enteroblast (Drosophila) in digestive tract and 67 other cell types or tissues"/>
</dbReference>
<dbReference type="ExpressionAtlas" id="Q9W0Y6">
    <property type="expression patterns" value="baseline and differential"/>
</dbReference>
<dbReference type="GO" id="GO:0034704">
    <property type="term" value="C:calcium channel complex"/>
    <property type="evidence" value="ECO:0000314"/>
    <property type="project" value="FlyBase"/>
</dbReference>
<dbReference type="GO" id="GO:0016020">
    <property type="term" value="C:membrane"/>
    <property type="evidence" value="ECO:0000303"/>
    <property type="project" value="FlyBase"/>
</dbReference>
<dbReference type="GO" id="GO:0005886">
    <property type="term" value="C:plasma membrane"/>
    <property type="evidence" value="ECO:0007005"/>
    <property type="project" value="FlyBase"/>
</dbReference>
<dbReference type="GO" id="GO:1902495">
    <property type="term" value="C:transmembrane transporter complex"/>
    <property type="evidence" value="ECO:0000318"/>
    <property type="project" value="GO_Central"/>
</dbReference>
<dbReference type="GO" id="GO:0005262">
    <property type="term" value="F:calcium channel activity"/>
    <property type="evidence" value="ECO:0000314"/>
    <property type="project" value="FlyBase"/>
</dbReference>
<dbReference type="GO" id="GO:0005227">
    <property type="term" value="F:calcium-activated cation channel activity"/>
    <property type="evidence" value="ECO:0000314"/>
    <property type="project" value="FlyBase"/>
</dbReference>
<dbReference type="GO" id="GO:0005216">
    <property type="term" value="F:monoatomic ion channel activity"/>
    <property type="evidence" value="ECO:0000304"/>
    <property type="project" value="FlyBase"/>
</dbReference>
<dbReference type="GO" id="GO:0022857">
    <property type="term" value="F:transmembrane transporter activity"/>
    <property type="evidence" value="ECO:0000318"/>
    <property type="project" value="GO_Central"/>
</dbReference>
<dbReference type="GO" id="GO:0048266">
    <property type="term" value="P:behavioral response to pain"/>
    <property type="evidence" value="ECO:0000315"/>
    <property type="project" value="FlyBase"/>
</dbReference>
<dbReference type="GO" id="GO:0070588">
    <property type="term" value="P:calcium ion transmembrane transport"/>
    <property type="evidence" value="ECO:0000314"/>
    <property type="project" value="FlyBase"/>
</dbReference>
<dbReference type="GO" id="GO:0006816">
    <property type="term" value="P:calcium ion transport"/>
    <property type="evidence" value="ECO:0000250"/>
    <property type="project" value="FlyBase"/>
</dbReference>
<dbReference type="GO" id="GO:0007620">
    <property type="term" value="P:copulation"/>
    <property type="evidence" value="ECO:0000315"/>
    <property type="project" value="FlyBase"/>
</dbReference>
<dbReference type="GO" id="GO:0120168">
    <property type="term" value="P:detection of hot stimulus involved in thermoception"/>
    <property type="evidence" value="ECO:0000315"/>
    <property type="project" value="FlyBase"/>
</dbReference>
<dbReference type="GO" id="GO:0050974">
    <property type="term" value="P:detection of mechanical stimulus involved in sensory perception"/>
    <property type="evidence" value="ECO:0000304"/>
    <property type="project" value="FlyBase"/>
</dbReference>
<dbReference type="GO" id="GO:0050966">
    <property type="term" value="P:detection of mechanical stimulus involved in sensory perception of pain"/>
    <property type="evidence" value="ECO:0000315"/>
    <property type="project" value="UniProtKB"/>
</dbReference>
<dbReference type="GO" id="GO:0050965">
    <property type="term" value="P:detection of temperature stimulus involved in sensory perception of pain"/>
    <property type="evidence" value="ECO:0000315"/>
    <property type="project" value="UniProtKB"/>
</dbReference>
<dbReference type="GO" id="GO:0050960">
    <property type="term" value="P:detection of temperature stimulus involved in thermoception"/>
    <property type="evidence" value="ECO:0000314"/>
    <property type="project" value="FlyBase"/>
</dbReference>
<dbReference type="GO" id="GO:0007631">
    <property type="term" value="P:feeding behavior"/>
    <property type="evidence" value="ECO:0000315"/>
    <property type="project" value="FlyBase"/>
</dbReference>
<dbReference type="GO" id="GO:0008345">
    <property type="term" value="P:larval locomotory behavior"/>
    <property type="evidence" value="ECO:0000315"/>
    <property type="project" value="FlyBase"/>
</dbReference>
<dbReference type="GO" id="GO:0008049">
    <property type="term" value="P:male courtship behavior"/>
    <property type="evidence" value="ECO:0000315"/>
    <property type="project" value="FlyBase"/>
</dbReference>
<dbReference type="GO" id="GO:0007638">
    <property type="term" value="P:mechanosensory behavior"/>
    <property type="evidence" value="ECO:0000315"/>
    <property type="project" value="FlyBase"/>
</dbReference>
<dbReference type="GO" id="GO:0034220">
    <property type="term" value="P:monoatomic ion transmembrane transport"/>
    <property type="evidence" value="ECO:0000318"/>
    <property type="project" value="GO_Central"/>
</dbReference>
<dbReference type="GO" id="GO:0048060">
    <property type="term" value="P:negative gravitaxis"/>
    <property type="evidence" value="ECO:0000315"/>
    <property type="project" value="FlyBase"/>
</dbReference>
<dbReference type="GO" id="GO:0042048">
    <property type="term" value="P:olfactory behavior"/>
    <property type="evidence" value="ECO:0000315"/>
    <property type="project" value="FlyBase"/>
</dbReference>
<dbReference type="GO" id="GO:0045924">
    <property type="term" value="P:regulation of female receptivity"/>
    <property type="evidence" value="ECO:0000315"/>
    <property type="project" value="FlyBase"/>
</dbReference>
<dbReference type="GO" id="GO:0008016">
    <property type="term" value="P:regulation of heart contraction"/>
    <property type="evidence" value="ECO:0000315"/>
    <property type="project" value="FlyBase"/>
</dbReference>
<dbReference type="GO" id="GO:0009408">
    <property type="term" value="P:response to heat"/>
    <property type="evidence" value="ECO:0000315"/>
    <property type="project" value="FlyBase"/>
</dbReference>
<dbReference type="GO" id="GO:0009612">
    <property type="term" value="P:response to mechanical stimulus"/>
    <property type="evidence" value="ECO:0000303"/>
    <property type="project" value="FlyBase"/>
</dbReference>
<dbReference type="GO" id="GO:0019233">
    <property type="term" value="P:sensory perception of pain"/>
    <property type="evidence" value="ECO:0000315"/>
    <property type="project" value="FlyBase"/>
</dbReference>
<dbReference type="Gene3D" id="1.10.287.70">
    <property type="match status" value="1"/>
</dbReference>
<dbReference type="Gene3D" id="1.25.40.20">
    <property type="entry name" value="Ankyrin repeat-containing domain"/>
    <property type="match status" value="2"/>
</dbReference>
<dbReference type="InterPro" id="IPR002110">
    <property type="entry name" value="Ankyrin_rpt"/>
</dbReference>
<dbReference type="InterPro" id="IPR036770">
    <property type="entry name" value="Ankyrin_rpt-contain_sf"/>
</dbReference>
<dbReference type="InterPro" id="IPR005821">
    <property type="entry name" value="Ion_trans_dom"/>
</dbReference>
<dbReference type="InterPro" id="IPR052076">
    <property type="entry name" value="TRP_cation_channel"/>
</dbReference>
<dbReference type="PANTHER" id="PTHR47143">
    <property type="entry name" value="TRANSIENT RECEPTOR POTENTIAL CATION CHANNEL PROTEIN PAINLESS"/>
    <property type="match status" value="1"/>
</dbReference>
<dbReference type="PANTHER" id="PTHR47143:SF4">
    <property type="entry name" value="TRANSIENT RECEPTOR POTENTIAL CATION CHANNEL PROTEIN PAINLESS"/>
    <property type="match status" value="1"/>
</dbReference>
<dbReference type="Pfam" id="PF00520">
    <property type="entry name" value="Ion_trans"/>
    <property type="match status" value="1"/>
</dbReference>
<dbReference type="SMART" id="SM00248">
    <property type="entry name" value="ANK"/>
    <property type="match status" value="4"/>
</dbReference>
<dbReference type="SUPFAM" id="SSF48403">
    <property type="entry name" value="Ankyrin repeat"/>
    <property type="match status" value="2"/>
</dbReference>
<dbReference type="PROSITE" id="PS50297">
    <property type="entry name" value="ANK_REP_REGION"/>
    <property type="match status" value="1"/>
</dbReference>
<sequence>MDFNNCGFIDPQAQLAGALAKQDIRQFVAALDSGALADLQDDRHTSIYEKALSTPGCRDFIEACIDHGSQVNYINKKLDKAAISYAADSRDPGNLAALLKYRPGNKVQVDRKYGQLTPLNSLAKNLTDENAPDVYSCMQLLLDYGASPNIVDQGEFTPLHHVLRKSKVKAGKKELIQLFLDHPELDIDSYRNGEVRRLLQAQFPELKLPEERHTGPEIDIQTLQRTLRDGDETLFEQQFAEYLQNLKGGADNQLNAHQEEYFGLLQESIKRGRQRAFDVILSTGMDINSRPGRANEANLVETAVIYGNWQALERLLKEPNLRLTPDSKLLNAVIGRLDEPPYDGSSHQRCFELLINSDRVDINEADSGRLVPLFFAVKYRNTSAMQKLLKNGAYIGSKSAFGTLPIKDMPPEVLEEHFDSCITTNGERPGDQNFEIIIDYKNLMRQERDSGLNQLQDEMAPIAFIAESKEMRHLLQHPLISSFLFLKWHRLSVIFYLNFLIYSLFTASIITYTLLKFHESDQRALTAFFGLLSWLGISYLILRECIQWIMSPVRYFWSITNIMEVALITLSIFTCMESSFDKETQRVLAVFTILLVSMEFCLLVGSLPVLSISTHMLMLREVSNSFLKSFTLYSIFVLTFSLCFYILFGKSVEEDQSKSATPCPPLGKKEGKDEEQGFNTFTKPIEAVIKTIVMLTGEFDAGSIQFTSIYTYLIFLLFVIFMTIVLFNLLNGLAVSDTQVIKAQAELNGAICRTNVLSRYEQVLTGHGRAGFLLGNHLFRSICQRLMNIYPNYLSLRQISVLPNDGNKVLIPMSDPFEMRTLKKASFQQLPLSAAVPQKKLLDPPLRLLPCCCSLLTGKCSQMSGRVVKRALEVIDQKNAAEQRRKQEQINDSRLKLIEYKLEQLIQLVQDRK</sequence>
<organism>
    <name type="scientific">Drosophila melanogaster</name>
    <name type="common">Fruit fly</name>
    <dbReference type="NCBI Taxonomy" id="7227"/>
    <lineage>
        <taxon>Eukaryota</taxon>
        <taxon>Metazoa</taxon>
        <taxon>Ecdysozoa</taxon>
        <taxon>Arthropoda</taxon>
        <taxon>Hexapoda</taxon>
        <taxon>Insecta</taxon>
        <taxon>Pterygota</taxon>
        <taxon>Neoptera</taxon>
        <taxon>Endopterygota</taxon>
        <taxon>Diptera</taxon>
        <taxon>Brachycera</taxon>
        <taxon>Muscomorpha</taxon>
        <taxon>Ephydroidea</taxon>
        <taxon>Drosophilidae</taxon>
        <taxon>Drosophila</taxon>
        <taxon>Sophophora</taxon>
    </lineage>
</organism>
<feature type="chain" id="PRO_0000215374" description="Transient receptor potential cation channel protein painless">
    <location>
        <begin position="1"/>
        <end position="913"/>
    </location>
</feature>
<feature type="topological domain" description="Cytoplasmic" evidence="1">
    <location>
        <begin position="1"/>
        <end position="490"/>
    </location>
</feature>
<feature type="transmembrane region" description="Helical; Name=1" evidence="1">
    <location>
        <begin position="491"/>
        <end position="511"/>
    </location>
</feature>
<feature type="topological domain" description="Extracellular" evidence="1">
    <location>
        <begin position="512"/>
        <end position="523"/>
    </location>
</feature>
<feature type="transmembrane region" description="Helical; Name=2" evidence="1">
    <location>
        <begin position="524"/>
        <end position="544"/>
    </location>
</feature>
<feature type="topological domain" description="Cytoplasmic" evidence="1">
    <location>
        <begin position="545"/>
        <end position="555"/>
    </location>
</feature>
<feature type="transmembrane region" description="Helical; Name=3" evidence="1">
    <location>
        <begin position="556"/>
        <end position="576"/>
    </location>
</feature>
<feature type="topological domain" description="Extracellular" evidence="1">
    <location>
        <begin position="577"/>
        <end position="586"/>
    </location>
</feature>
<feature type="transmembrane region" description="Helical; Name=4" evidence="1">
    <location>
        <begin position="587"/>
        <end position="607"/>
    </location>
</feature>
<feature type="topological domain" description="Cytoplasmic" evidence="1">
    <location>
        <begin position="608"/>
        <end position="628"/>
    </location>
</feature>
<feature type="transmembrane region" description="Helical; Name=5" evidence="1">
    <location>
        <begin position="629"/>
        <end position="649"/>
    </location>
</feature>
<feature type="topological domain" description="Extracellular" evidence="1">
    <location>
        <begin position="650"/>
        <end position="708"/>
    </location>
</feature>
<feature type="transmembrane region" description="Helical; Name=6" evidence="1">
    <location>
        <begin position="709"/>
        <end position="729"/>
    </location>
</feature>
<feature type="topological domain" description="Cytoplasmic" evidence="1">
    <location>
        <begin position="730"/>
        <end position="913"/>
    </location>
</feature>
<feature type="repeat" description="ANK 1">
    <location>
        <begin position="154"/>
        <end position="189"/>
    </location>
</feature>
<feature type="repeat" description="ANK 2">
    <location>
        <begin position="260"/>
        <end position="289"/>
    </location>
</feature>
<feature type="repeat" description="ANK 3">
    <location>
        <begin position="368"/>
        <end position="397"/>
    </location>
</feature>
<feature type="region of interest" description="Disordered" evidence="2">
    <location>
        <begin position="656"/>
        <end position="675"/>
    </location>
</feature>
<protein>
    <recommendedName>
        <fullName>Transient receptor potential cation channel protein painless</fullName>
    </recommendedName>
</protein>
<gene>
    <name type="primary">pain</name>
    <name type="ORF">CG15860</name>
</gene>
<name>PAIN_DROME</name>
<proteinExistence type="evidence at protein level"/>
<keyword id="KW-0040">ANK repeat</keyword>
<keyword id="KW-0407">Ion channel</keyword>
<keyword id="KW-0406">Ion transport</keyword>
<keyword id="KW-0472">Membrane</keyword>
<keyword id="KW-1185">Reference proteome</keyword>
<keyword id="KW-0677">Repeat</keyword>
<keyword id="KW-0716">Sensory transduction</keyword>
<keyword id="KW-0812">Transmembrane</keyword>
<keyword id="KW-1133">Transmembrane helix</keyword>
<keyword id="KW-0813">Transport</keyword>
<comment type="function">
    <text evidence="3">Receptor-activated non-selective cation channel involved in detection of pain sensation due to high temperature. Involved in heat nociception by being activated by noxious temperature of 38 degrees Celsius.</text>
</comment>
<comment type="subcellular location">
    <subcellularLocation>
        <location evidence="4">Membrane</location>
        <topology evidence="4">Multi-pass membrane protein</topology>
    </subcellularLocation>
</comment>
<comment type="tissue specificity">
    <text evidence="3">Present in multidendritic neurons, chordotonal neurons, a subset of cells in the central nervous system and a subset of sensory neurons in the antennal-maxillary complex. Not detected in gonads and dorsal vessels (at protein level). Expressed in peripheral neurons that extend multiple branched dendrites beneath the larval epidermis, similar to vertebrate pain receptors.</text>
</comment>
<comment type="developmental stage">
    <text>Expressed from stage 13 of embryonic development in a small number of cells in the central nervous system and in a subset of neurons of the peripheral nervous system. Such cells may include sensory precursors of multidendritic (md) neurons. At embryonic stage 16, prior to when dendritic process are elaborated, it appears to be expressed in multidendritic neurons in a polarized manner. At stage 17 of development, when the md neurons first initiate dendritogenesis, it is localized to branched projections initiating from clusters of multidendritic neurons.</text>
</comment>
<comment type="similarity">
    <text evidence="4">Belongs to the transient receptor (TC 1.A.4) family.</text>
</comment>